<feature type="chain" id="PRO_0000136005" description="Shikimate dehydrogenase (NADP(+))">
    <location>
        <begin position="1"/>
        <end position="276"/>
    </location>
</feature>
<feature type="active site" description="Proton acceptor" evidence="1">
    <location>
        <position position="66"/>
    </location>
</feature>
<feature type="binding site" evidence="1">
    <location>
        <begin position="15"/>
        <end position="17"/>
    </location>
    <ligand>
        <name>shikimate</name>
        <dbReference type="ChEBI" id="CHEBI:36208"/>
    </ligand>
</feature>
<feature type="binding site" evidence="1">
    <location>
        <position position="62"/>
    </location>
    <ligand>
        <name>shikimate</name>
        <dbReference type="ChEBI" id="CHEBI:36208"/>
    </ligand>
</feature>
<feature type="binding site" evidence="1">
    <location>
        <position position="78"/>
    </location>
    <ligand>
        <name>NADP(+)</name>
        <dbReference type="ChEBI" id="CHEBI:58349"/>
    </ligand>
</feature>
<feature type="binding site" evidence="1">
    <location>
        <position position="87"/>
    </location>
    <ligand>
        <name>shikimate</name>
        <dbReference type="ChEBI" id="CHEBI:36208"/>
    </ligand>
</feature>
<feature type="binding site" evidence="1">
    <location>
        <position position="103"/>
    </location>
    <ligand>
        <name>shikimate</name>
        <dbReference type="ChEBI" id="CHEBI:36208"/>
    </ligand>
</feature>
<feature type="binding site" evidence="1">
    <location>
        <begin position="127"/>
        <end position="131"/>
    </location>
    <ligand>
        <name>NADP(+)</name>
        <dbReference type="ChEBI" id="CHEBI:58349"/>
    </ligand>
</feature>
<feature type="binding site" evidence="1">
    <location>
        <begin position="150"/>
        <end position="155"/>
    </location>
    <ligand>
        <name>NADP(+)</name>
        <dbReference type="ChEBI" id="CHEBI:58349"/>
    </ligand>
</feature>
<feature type="binding site" evidence="1">
    <location>
        <position position="214"/>
    </location>
    <ligand>
        <name>NADP(+)</name>
        <dbReference type="ChEBI" id="CHEBI:58349"/>
    </ligand>
</feature>
<feature type="binding site" evidence="1">
    <location>
        <position position="216"/>
    </location>
    <ligand>
        <name>shikimate</name>
        <dbReference type="ChEBI" id="CHEBI:36208"/>
    </ligand>
</feature>
<feature type="binding site" evidence="1">
    <location>
        <position position="239"/>
    </location>
    <ligand>
        <name>NADP(+)</name>
        <dbReference type="ChEBI" id="CHEBI:58349"/>
    </ligand>
</feature>
<organism>
    <name type="scientific">Haemophilus ducreyi (strain 35000HP / ATCC 700724)</name>
    <dbReference type="NCBI Taxonomy" id="233412"/>
    <lineage>
        <taxon>Bacteria</taxon>
        <taxon>Pseudomonadati</taxon>
        <taxon>Pseudomonadota</taxon>
        <taxon>Gammaproteobacteria</taxon>
        <taxon>Pasteurellales</taxon>
        <taxon>Pasteurellaceae</taxon>
        <taxon>Haemophilus</taxon>
    </lineage>
</organism>
<keyword id="KW-0028">Amino-acid biosynthesis</keyword>
<keyword id="KW-0057">Aromatic amino acid biosynthesis</keyword>
<keyword id="KW-0521">NADP</keyword>
<keyword id="KW-0560">Oxidoreductase</keyword>
<keyword id="KW-1185">Reference proteome</keyword>
<comment type="function">
    <text evidence="1">Involved in the biosynthesis of the chorismate, which leads to the biosynthesis of aromatic amino acids. Catalyzes the reversible NADPH linked reduction of 3-dehydroshikimate (DHSA) to yield shikimate (SA).</text>
</comment>
<comment type="catalytic activity">
    <reaction evidence="1">
        <text>shikimate + NADP(+) = 3-dehydroshikimate + NADPH + H(+)</text>
        <dbReference type="Rhea" id="RHEA:17737"/>
        <dbReference type="ChEBI" id="CHEBI:15378"/>
        <dbReference type="ChEBI" id="CHEBI:16630"/>
        <dbReference type="ChEBI" id="CHEBI:36208"/>
        <dbReference type="ChEBI" id="CHEBI:57783"/>
        <dbReference type="ChEBI" id="CHEBI:58349"/>
        <dbReference type="EC" id="1.1.1.25"/>
    </reaction>
</comment>
<comment type="pathway">
    <text evidence="1">Metabolic intermediate biosynthesis; chorismate biosynthesis; chorismate from D-erythrose 4-phosphate and phosphoenolpyruvate: step 4/7.</text>
</comment>
<comment type="subunit">
    <text evidence="1">Homodimer.</text>
</comment>
<comment type="similarity">
    <text evidence="1">Belongs to the shikimate dehydrogenase family.</text>
</comment>
<dbReference type="EC" id="1.1.1.25" evidence="1"/>
<dbReference type="EMBL" id="AE017143">
    <property type="protein sequence ID" value="AAP95380.1"/>
    <property type="molecule type" value="Genomic_DNA"/>
</dbReference>
<dbReference type="RefSeq" id="WP_010944433.1">
    <property type="nucleotide sequence ID" value="NC_002940.2"/>
</dbReference>
<dbReference type="SMR" id="Q7VNS2"/>
<dbReference type="STRING" id="233412.HD_0415"/>
<dbReference type="KEGG" id="hdu:HD_0415"/>
<dbReference type="eggNOG" id="COG0169">
    <property type="taxonomic scope" value="Bacteria"/>
</dbReference>
<dbReference type="HOGENOM" id="CLU_044063_2_1_6"/>
<dbReference type="OrthoDB" id="9776868at2"/>
<dbReference type="UniPathway" id="UPA00053">
    <property type="reaction ID" value="UER00087"/>
</dbReference>
<dbReference type="Proteomes" id="UP000001022">
    <property type="component" value="Chromosome"/>
</dbReference>
<dbReference type="GO" id="GO:0005829">
    <property type="term" value="C:cytosol"/>
    <property type="evidence" value="ECO:0007669"/>
    <property type="project" value="TreeGrafter"/>
</dbReference>
<dbReference type="GO" id="GO:0050661">
    <property type="term" value="F:NADP binding"/>
    <property type="evidence" value="ECO:0007669"/>
    <property type="project" value="InterPro"/>
</dbReference>
<dbReference type="GO" id="GO:0004764">
    <property type="term" value="F:shikimate 3-dehydrogenase (NADP+) activity"/>
    <property type="evidence" value="ECO:0007669"/>
    <property type="project" value="UniProtKB-UniRule"/>
</dbReference>
<dbReference type="GO" id="GO:0008652">
    <property type="term" value="P:amino acid biosynthetic process"/>
    <property type="evidence" value="ECO:0007669"/>
    <property type="project" value="UniProtKB-KW"/>
</dbReference>
<dbReference type="GO" id="GO:0009073">
    <property type="term" value="P:aromatic amino acid family biosynthetic process"/>
    <property type="evidence" value="ECO:0007669"/>
    <property type="project" value="UniProtKB-KW"/>
</dbReference>
<dbReference type="GO" id="GO:0009423">
    <property type="term" value="P:chorismate biosynthetic process"/>
    <property type="evidence" value="ECO:0007669"/>
    <property type="project" value="UniProtKB-UniRule"/>
</dbReference>
<dbReference type="GO" id="GO:0019632">
    <property type="term" value="P:shikimate metabolic process"/>
    <property type="evidence" value="ECO:0007669"/>
    <property type="project" value="InterPro"/>
</dbReference>
<dbReference type="CDD" id="cd01065">
    <property type="entry name" value="NAD_bind_Shikimate_DH"/>
    <property type="match status" value="1"/>
</dbReference>
<dbReference type="FunFam" id="3.40.50.10860:FF:000006">
    <property type="entry name" value="Shikimate dehydrogenase (NADP(+))"/>
    <property type="match status" value="1"/>
</dbReference>
<dbReference type="Gene3D" id="3.40.50.10860">
    <property type="entry name" value="Leucine Dehydrogenase, chain A, domain 1"/>
    <property type="match status" value="1"/>
</dbReference>
<dbReference type="Gene3D" id="3.40.50.720">
    <property type="entry name" value="NAD(P)-binding Rossmann-like Domain"/>
    <property type="match status" value="1"/>
</dbReference>
<dbReference type="HAMAP" id="MF_00222">
    <property type="entry name" value="Shikimate_DH_AroE"/>
    <property type="match status" value="1"/>
</dbReference>
<dbReference type="InterPro" id="IPR046346">
    <property type="entry name" value="Aminoacid_DH-like_N_sf"/>
</dbReference>
<dbReference type="InterPro" id="IPR036291">
    <property type="entry name" value="NAD(P)-bd_dom_sf"/>
</dbReference>
<dbReference type="InterPro" id="IPR041121">
    <property type="entry name" value="SDH_C"/>
</dbReference>
<dbReference type="InterPro" id="IPR011342">
    <property type="entry name" value="Shikimate_DH"/>
</dbReference>
<dbReference type="InterPro" id="IPR013708">
    <property type="entry name" value="Shikimate_DH-bd_N"/>
</dbReference>
<dbReference type="InterPro" id="IPR022893">
    <property type="entry name" value="Shikimate_DH_fam"/>
</dbReference>
<dbReference type="InterPro" id="IPR006151">
    <property type="entry name" value="Shikm_DH/Glu-tRNA_Rdtase"/>
</dbReference>
<dbReference type="NCBIfam" id="TIGR00507">
    <property type="entry name" value="aroE"/>
    <property type="match status" value="1"/>
</dbReference>
<dbReference type="NCBIfam" id="NF001310">
    <property type="entry name" value="PRK00258.1-2"/>
    <property type="match status" value="1"/>
</dbReference>
<dbReference type="PANTHER" id="PTHR21089:SF1">
    <property type="entry name" value="BIFUNCTIONAL 3-DEHYDROQUINATE DEHYDRATASE_SHIKIMATE DEHYDROGENASE, CHLOROPLASTIC"/>
    <property type="match status" value="1"/>
</dbReference>
<dbReference type="PANTHER" id="PTHR21089">
    <property type="entry name" value="SHIKIMATE DEHYDROGENASE"/>
    <property type="match status" value="1"/>
</dbReference>
<dbReference type="Pfam" id="PF18317">
    <property type="entry name" value="SDH_C"/>
    <property type="match status" value="1"/>
</dbReference>
<dbReference type="Pfam" id="PF01488">
    <property type="entry name" value="Shikimate_DH"/>
    <property type="match status" value="1"/>
</dbReference>
<dbReference type="Pfam" id="PF08501">
    <property type="entry name" value="Shikimate_dh_N"/>
    <property type="match status" value="1"/>
</dbReference>
<dbReference type="SUPFAM" id="SSF53223">
    <property type="entry name" value="Aminoacid dehydrogenase-like, N-terminal domain"/>
    <property type="match status" value="1"/>
</dbReference>
<dbReference type="SUPFAM" id="SSF51735">
    <property type="entry name" value="NAD(P)-binding Rossmann-fold domains"/>
    <property type="match status" value="1"/>
</dbReference>
<protein>
    <recommendedName>
        <fullName evidence="1">Shikimate dehydrogenase (NADP(+))</fullName>
        <shortName evidence="1">SDH</shortName>
        <ecNumber evidence="1">1.1.1.25</ecNumber>
    </recommendedName>
</protein>
<evidence type="ECO:0000255" key="1">
    <source>
        <dbReference type="HAMAP-Rule" id="MF_00222"/>
    </source>
</evidence>
<name>AROE_HAEDU</name>
<accession>Q7VNS2</accession>
<gene>
    <name evidence="1" type="primary">aroE</name>
    <name type="ordered locus">HD_0415</name>
</gene>
<sequence length="276" mass="30602">MARQYAVWGNPIAHSKSPYIHQLFAQQSNRRIEYAAKLGDKIAFEKQLVQFFTDGANGVNITSPFKARAFRLADVCSESCLLAGAANTLKRLDDGRLFADNTDGKGFCADLARLEWLIPEQRVLILGAGGVTKGVLLPLLLAKQKVTLSNRTHIKAVELAQQFAKYGDIQAVSLSEIVQHPPFDLIINATSLGLQGGYIALPNHLFEKSAVYDMEYASNMCTPFLNYVRTQGVTRYQDGLGMLVNQAAFSFQLWEGELPKVENVLKQLRAEMGYVK</sequence>
<reference key="1">
    <citation type="submission" date="2003-06" db="EMBL/GenBank/DDBJ databases">
        <title>The complete genome sequence of Haemophilus ducreyi.</title>
        <authorList>
            <person name="Munson R.S. Jr."/>
            <person name="Ray W.C."/>
            <person name="Mahairas G."/>
            <person name="Sabo P."/>
            <person name="Mungur R."/>
            <person name="Johnson L."/>
            <person name="Nguyen D."/>
            <person name="Wang J."/>
            <person name="Forst C."/>
            <person name="Hood L."/>
        </authorList>
    </citation>
    <scope>NUCLEOTIDE SEQUENCE [LARGE SCALE GENOMIC DNA]</scope>
    <source>
        <strain>35000HP / ATCC 700724</strain>
    </source>
</reference>
<proteinExistence type="inferred from homology"/>